<feature type="chain" id="PRO_1000065691" description="UDP-4-amino-4-deoxy-L-arabinose--oxoglutarate aminotransferase">
    <location>
        <begin position="1"/>
        <end position="382"/>
    </location>
</feature>
<feature type="modified residue" description="N6-(pyridoxal phosphate)lysine" evidence="1">
    <location>
        <position position="182"/>
    </location>
</feature>
<keyword id="KW-0032">Aminotransferase</keyword>
<keyword id="KW-0046">Antibiotic resistance</keyword>
<keyword id="KW-0441">Lipid A biosynthesis</keyword>
<keyword id="KW-0444">Lipid biosynthesis</keyword>
<keyword id="KW-0443">Lipid metabolism</keyword>
<keyword id="KW-0448">Lipopolysaccharide biosynthesis</keyword>
<keyword id="KW-0663">Pyridoxal phosphate</keyword>
<keyword id="KW-0808">Transferase</keyword>
<comment type="function">
    <text evidence="1">Catalyzes the conversion of UDP-4-keto-arabinose (UDP-Ara4O) to UDP-4-amino-4-deoxy-L-arabinose (UDP-L-Ara4N). The modified arabinose is attached to lipid A and is required for resistance to polymyxin and cationic antimicrobial peptides.</text>
</comment>
<comment type="catalytic activity">
    <reaction evidence="1">
        <text>UDP-4-amino-4-deoxy-beta-L-arabinose + 2-oxoglutarate = UDP-beta-L-threo-pentopyranos-4-ulose + L-glutamate</text>
        <dbReference type="Rhea" id="RHEA:24710"/>
        <dbReference type="ChEBI" id="CHEBI:16810"/>
        <dbReference type="ChEBI" id="CHEBI:29985"/>
        <dbReference type="ChEBI" id="CHEBI:58708"/>
        <dbReference type="ChEBI" id="CHEBI:58710"/>
        <dbReference type="EC" id="2.6.1.87"/>
    </reaction>
</comment>
<comment type="cofactor">
    <cofactor evidence="1">
        <name>pyridoxal 5'-phosphate</name>
        <dbReference type="ChEBI" id="CHEBI:597326"/>
    </cofactor>
</comment>
<comment type="pathway">
    <text evidence="1">Nucleotide-sugar biosynthesis; UDP-4-deoxy-4-formamido-beta-L-arabinose biosynthesis; UDP-4-deoxy-4-formamido-beta-L-arabinose from UDP-alpha-D-glucuronate: step 2/3.</text>
</comment>
<comment type="pathway">
    <text evidence="1">Bacterial outer membrane biogenesis; lipopolysaccharide biosynthesis.</text>
</comment>
<comment type="subunit">
    <text evidence="1">Homodimer.</text>
</comment>
<comment type="similarity">
    <text evidence="1">Belongs to the DegT/DnrJ/EryC1 family. ArnB subfamily.</text>
</comment>
<evidence type="ECO:0000255" key="1">
    <source>
        <dbReference type="HAMAP-Rule" id="MF_01167"/>
    </source>
</evidence>
<accession>A1JPP9</accession>
<sequence length="382" mass="41961">MQNFLPFSRPAIGSDEINAVVNVLGSGWITTGPQNQQLETDFCAAFGCKHAVAVCSATAGMHITLMALGIGPGDEVITPSQTWVSTINMIVLLGAEPVMVDIDRDTLMVNAADIEAAITSKTKAIIPVHYAGAPCDLDALRQIAQQYKIPLIEDAAHAVGTRYGDQWVGEKGTTIFSFHAIKNITCAEGGLIATDDDELAAKVRRLKFHGLGVDAFDRQIQGRSPQAEVVEPGYKYNLSDIHAAIAVVQLQRLPEINARRQALAARYHQALVDSPLQPLFVPDYAHQHAWHLFMVRVDKERCGIDRDSLMARLKEVGIGSGLHFRAAHTQKYYRERYPSLHLPNTEWNSARLCTLPLFPDMLDSDVDRVVDALATIIGPHRV</sequence>
<proteinExistence type="inferred from homology"/>
<protein>
    <recommendedName>
        <fullName evidence="1">UDP-4-amino-4-deoxy-L-arabinose--oxoglutarate aminotransferase</fullName>
        <ecNumber evidence="1">2.6.1.87</ecNumber>
    </recommendedName>
    <alternativeName>
        <fullName evidence="1">UDP-(beta-L-threo-pentapyranosyl-4''-ulose diphosphate) aminotransferase</fullName>
        <shortName evidence="1">UDP-Ara4O aminotransferase</shortName>
    </alternativeName>
    <alternativeName>
        <fullName evidence="1">UDP-4-amino-4-deoxy-L-arabinose aminotransferase</fullName>
    </alternativeName>
</protein>
<dbReference type="EC" id="2.6.1.87" evidence="1"/>
<dbReference type="EMBL" id="AM286415">
    <property type="protein sequence ID" value="CAL12262.1"/>
    <property type="molecule type" value="Genomic_DNA"/>
</dbReference>
<dbReference type="RefSeq" id="WP_011816395.1">
    <property type="nucleotide sequence ID" value="NC_008800.1"/>
</dbReference>
<dbReference type="RefSeq" id="YP_001006432.1">
    <property type="nucleotide sequence ID" value="NC_008800.1"/>
</dbReference>
<dbReference type="SMR" id="A1JPP9"/>
<dbReference type="KEGG" id="yen:YE2192"/>
<dbReference type="PATRIC" id="fig|393305.7.peg.2357"/>
<dbReference type="eggNOG" id="COG0399">
    <property type="taxonomic scope" value="Bacteria"/>
</dbReference>
<dbReference type="HOGENOM" id="CLU_033332_0_3_6"/>
<dbReference type="OrthoDB" id="9804264at2"/>
<dbReference type="UniPathway" id="UPA00030"/>
<dbReference type="UniPathway" id="UPA00032">
    <property type="reaction ID" value="UER00493"/>
</dbReference>
<dbReference type="Proteomes" id="UP000000642">
    <property type="component" value="Chromosome"/>
</dbReference>
<dbReference type="GO" id="GO:0016020">
    <property type="term" value="C:membrane"/>
    <property type="evidence" value="ECO:0007669"/>
    <property type="project" value="GOC"/>
</dbReference>
<dbReference type="GO" id="GO:0030170">
    <property type="term" value="F:pyridoxal phosphate binding"/>
    <property type="evidence" value="ECO:0007669"/>
    <property type="project" value="TreeGrafter"/>
</dbReference>
<dbReference type="GO" id="GO:0099620">
    <property type="term" value="F:UDP-4-amino-4-deoxy-L-arabinose aminotransferase"/>
    <property type="evidence" value="ECO:0007669"/>
    <property type="project" value="UniProtKB-EC"/>
</dbReference>
<dbReference type="GO" id="GO:0009245">
    <property type="term" value="P:lipid A biosynthetic process"/>
    <property type="evidence" value="ECO:0007669"/>
    <property type="project" value="UniProtKB-KW"/>
</dbReference>
<dbReference type="GO" id="GO:0009103">
    <property type="term" value="P:lipopolysaccharide biosynthetic process"/>
    <property type="evidence" value="ECO:0007669"/>
    <property type="project" value="UniProtKB-UniRule"/>
</dbReference>
<dbReference type="GO" id="GO:0046677">
    <property type="term" value="P:response to antibiotic"/>
    <property type="evidence" value="ECO:0007669"/>
    <property type="project" value="UniProtKB-KW"/>
</dbReference>
<dbReference type="CDD" id="cd00616">
    <property type="entry name" value="AHBA_syn"/>
    <property type="match status" value="1"/>
</dbReference>
<dbReference type="FunFam" id="3.40.640.10:FF:000040">
    <property type="entry name" value="UDP-4-amino-4-deoxy-L-arabinose--oxoglutarate aminotransferase"/>
    <property type="match status" value="1"/>
</dbReference>
<dbReference type="FunFam" id="3.90.1150.10:FF:000030">
    <property type="entry name" value="UDP-4-amino-4-deoxy-L-arabinose--oxoglutarate aminotransferase"/>
    <property type="match status" value="1"/>
</dbReference>
<dbReference type="Gene3D" id="3.90.1150.10">
    <property type="entry name" value="Aspartate Aminotransferase, domain 1"/>
    <property type="match status" value="1"/>
</dbReference>
<dbReference type="Gene3D" id="3.40.640.10">
    <property type="entry name" value="Type I PLP-dependent aspartate aminotransferase-like (Major domain)"/>
    <property type="match status" value="1"/>
</dbReference>
<dbReference type="HAMAP" id="MF_01167">
    <property type="entry name" value="ArnB_transfer"/>
    <property type="match status" value="1"/>
</dbReference>
<dbReference type="InterPro" id="IPR022850">
    <property type="entry name" value="ArnB_NH2Trfase"/>
</dbReference>
<dbReference type="InterPro" id="IPR000653">
    <property type="entry name" value="DegT/StrS_aminotransferase"/>
</dbReference>
<dbReference type="InterPro" id="IPR015424">
    <property type="entry name" value="PyrdxlP-dep_Trfase"/>
</dbReference>
<dbReference type="InterPro" id="IPR015421">
    <property type="entry name" value="PyrdxlP-dep_Trfase_major"/>
</dbReference>
<dbReference type="InterPro" id="IPR015422">
    <property type="entry name" value="PyrdxlP-dep_Trfase_small"/>
</dbReference>
<dbReference type="NCBIfam" id="NF008658">
    <property type="entry name" value="PRK11658.1"/>
    <property type="match status" value="1"/>
</dbReference>
<dbReference type="PANTHER" id="PTHR30244">
    <property type="entry name" value="TRANSAMINASE"/>
    <property type="match status" value="1"/>
</dbReference>
<dbReference type="PANTHER" id="PTHR30244:SF41">
    <property type="entry name" value="UDP-4-AMINO-4-DEOXY-L-ARABINOSE--OXOGLUTARATE AMINOTRANSFERASE"/>
    <property type="match status" value="1"/>
</dbReference>
<dbReference type="Pfam" id="PF01041">
    <property type="entry name" value="DegT_DnrJ_EryC1"/>
    <property type="match status" value="1"/>
</dbReference>
<dbReference type="PIRSF" id="PIRSF000390">
    <property type="entry name" value="PLP_StrS"/>
    <property type="match status" value="1"/>
</dbReference>
<dbReference type="SUPFAM" id="SSF53383">
    <property type="entry name" value="PLP-dependent transferases"/>
    <property type="match status" value="1"/>
</dbReference>
<name>ARNB_YERE8</name>
<organism>
    <name type="scientific">Yersinia enterocolitica serotype O:8 / biotype 1B (strain NCTC 13174 / 8081)</name>
    <dbReference type="NCBI Taxonomy" id="393305"/>
    <lineage>
        <taxon>Bacteria</taxon>
        <taxon>Pseudomonadati</taxon>
        <taxon>Pseudomonadota</taxon>
        <taxon>Gammaproteobacteria</taxon>
        <taxon>Enterobacterales</taxon>
        <taxon>Yersiniaceae</taxon>
        <taxon>Yersinia</taxon>
    </lineage>
</organism>
<reference key="1">
    <citation type="journal article" date="2006" name="PLoS Genet.">
        <title>The complete genome sequence and comparative genome analysis of the high pathogenicity Yersinia enterocolitica strain 8081.</title>
        <authorList>
            <person name="Thomson N.R."/>
            <person name="Howard S."/>
            <person name="Wren B.W."/>
            <person name="Holden M.T.G."/>
            <person name="Crossman L."/>
            <person name="Challis G.L."/>
            <person name="Churcher C."/>
            <person name="Mungall K."/>
            <person name="Brooks K."/>
            <person name="Chillingworth T."/>
            <person name="Feltwell T."/>
            <person name="Abdellah Z."/>
            <person name="Hauser H."/>
            <person name="Jagels K."/>
            <person name="Maddison M."/>
            <person name="Moule S."/>
            <person name="Sanders M."/>
            <person name="Whitehead S."/>
            <person name="Quail M.A."/>
            <person name="Dougan G."/>
            <person name="Parkhill J."/>
            <person name="Prentice M.B."/>
        </authorList>
    </citation>
    <scope>NUCLEOTIDE SEQUENCE [LARGE SCALE GENOMIC DNA]</scope>
    <source>
        <strain>NCTC 13174 / 8081</strain>
    </source>
</reference>
<gene>
    <name evidence="1" type="primary">arnB</name>
    <name type="ordered locus">YE2192</name>
</gene>